<dbReference type="EMBL" id="CP000575">
    <property type="protein sequence ID" value="ABN70269.1"/>
    <property type="molecule type" value="Genomic_DNA"/>
</dbReference>
<dbReference type="RefSeq" id="WP_011839460.1">
    <property type="nucleotide sequence ID" value="NC_009033.1"/>
</dbReference>
<dbReference type="SMR" id="A3DNQ9"/>
<dbReference type="STRING" id="399550.Smar_1174"/>
<dbReference type="GeneID" id="4907632"/>
<dbReference type="KEGG" id="smr:Smar_1174"/>
<dbReference type="eggNOG" id="arCOG00869">
    <property type="taxonomic scope" value="Archaea"/>
</dbReference>
<dbReference type="HOGENOM" id="CLU_120324_0_0_2"/>
<dbReference type="OrthoDB" id="378104at2157"/>
<dbReference type="Proteomes" id="UP000000254">
    <property type="component" value="Chromosome"/>
</dbReference>
<dbReference type="GO" id="GO:0005886">
    <property type="term" value="C:plasma membrane"/>
    <property type="evidence" value="ECO:0007669"/>
    <property type="project" value="UniProtKB-SubCell"/>
</dbReference>
<dbReference type="GO" id="GO:0033178">
    <property type="term" value="C:proton-transporting two-sector ATPase complex, catalytic domain"/>
    <property type="evidence" value="ECO:0007669"/>
    <property type="project" value="InterPro"/>
</dbReference>
<dbReference type="GO" id="GO:0005524">
    <property type="term" value="F:ATP binding"/>
    <property type="evidence" value="ECO:0007669"/>
    <property type="project" value="UniProtKB-UniRule"/>
</dbReference>
<dbReference type="GO" id="GO:0046933">
    <property type="term" value="F:proton-transporting ATP synthase activity, rotational mechanism"/>
    <property type="evidence" value="ECO:0007669"/>
    <property type="project" value="UniProtKB-UniRule"/>
</dbReference>
<dbReference type="GO" id="GO:0046961">
    <property type="term" value="F:proton-transporting ATPase activity, rotational mechanism"/>
    <property type="evidence" value="ECO:0007669"/>
    <property type="project" value="InterPro"/>
</dbReference>
<dbReference type="GO" id="GO:0042777">
    <property type="term" value="P:proton motive force-driven plasma membrane ATP synthesis"/>
    <property type="evidence" value="ECO:0007669"/>
    <property type="project" value="UniProtKB-UniRule"/>
</dbReference>
<dbReference type="Gene3D" id="3.30.2320.30">
    <property type="entry name" value="ATP synthase, E subunit, C-terminal"/>
    <property type="match status" value="1"/>
</dbReference>
<dbReference type="Gene3D" id="1.20.5.620">
    <property type="entry name" value="F1F0 ATP synthase subunit B, membrane domain"/>
    <property type="match status" value="1"/>
</dbReference>
<dbReference type="HAMAP" id="MF_00311">
    <property type="entry name" value="ATP_synth_E_arch"/>
    <property type="match status" value="1"/>
</dbReference>
<dbReference type="InterPro" id="IPR028987">
    <property type="entry name" value="ATP_synth_B-like_membr_sf"/>
</dbReference>
<dbReference type="InterPro" id="IPR038495">
    <property type="entry name" value="ATPase_E_C"/>
</dbReference>
<dbReference type="InterPro" id="IPR002842">
    <property type="entry name" value="ATPase_V1_Esu"/>
</dbReference>
<dbReference type="Pfam" id="PF01991">
    <property type="entry name" value="vATP-synt_E"/>
    <property type="match status" value="1"/>
</dbReference>
<dbReference type="SUPFAM" id="SSF81573">
    <property type="entry name" value="F1F0 ATP synthase subunit B, membrane domain"/>
    <property type="match status" value="1"/>
</dbReference>
<dbReference type="SUPFAM" id="SSF160527">
    <property type="entry name" value="V-type ATPase subunit E-like"/>
    <property type="match status" value="1"/>
</dbReference>
<protein>
    <recommendedName>
        <fullName evidence="1">A-type ATP synthase subunit E</fullName>
    </recommendedName>
</protein>
<gene>
    <name evidence="1" type="primary">atpE</name>
    <name type="ordered locus">Smar_1174</name>
</gene>
<reference key="1">
    <citation type="journal article" date="2009" name="BMC Genomics">
        <title>The complete genome sequence of Staphylothermus marinus reveals differences in sulfur metabolism among heterotrophic Crenarchaeota.</title>
        <authorList>
            <person name="Anderson I.J."/>
            <person name="Dharmarajan L."/>
            <person name="Rodriguez J."/>
            <person name="Hooper S."/>
            <person name="Porat I."/>
            <person name="Ulrich L.E."/>
            <person name="Elkins J.G."/>
            <person name="Mavromatis K."/>
            <person name="Sun H."/>
            <person name="Land M."/>
            <person name="Lapidus A."/>
            <person name="Lucas S."/>
            <person name="Barry K."/>
            <person name="Huber H."/>
            <person name="Zhulin I.B."/>
            <person name="Whitman W.B."/>
            <person name="Mukhopadhyay B."/>
            <person name="Woese C."/>
            <person name="Bristow J."/>
            <person name="Kyrpides N."/>
        </authorList>
    </citation>
    <scope>NUCLEOTIDE SEQUENCE [LARGE SCALE GENOMIC DNA]</scope>
    <source>
        <strain>ATCC 43588 / DSM 3639 / JCM 9404 / F1</strain>
    </source>
</reference>
<reference key="2">
    <citation type="journal article" date="2009" name="Stand. Genomic Sci.">
        <title>Complete genome sequence of Staphylothermus marinus Stetter and Fiala 1986 type strain F1.</title>
        <authorList>
            <person name="Anderson I.J."/>
            <person name="Sun H."/>
            <person name="Lapidus A."/>
            <person name="Copeland A."/>
            <person name="Glavina Del Rio T."/>
            <person name="Tice H."/>
            <person name="Dalin E."/>
            <person name="Lucas S."/>
            <person name="Barry K."/>
            <person name="Land M."/>
            <person name="Richardson P."/>
            <person name="Huber H."/>
            <person name="Kyrpides N.C."/>
        </authorList>
    </citation>
    <scope>NUCLEOTIDE SEQUENCE [LARGE SCALE GENOMIC DNA]</scope>
    <source>
        <strain>ATCC 43588 / DSM 3639 / JCM 9404 / F1</strain>
    </source>
</reference>
<accession>A3DNQ9</accession>
<organism>
    <name type="scientific">Staphylothermus marinus (strain ATCC 43588 / DSM 3639 / JCM 9404 / F1)</name>
    <dbReference type="NCBI Taxonomy" id="399550"/>
    <lineage>
        <taxon>Archaea</taxon>
        <taxon>Thermoproteota</taxon>
        <taxon>Thermoprotei</taxon>
        <taxon>Desulfurococcales</taxon>
        <taxon>Desulfurococcaceae</taxon>
        <taxon>Staphylothermus</taxon>
    </lineage>
</organism>
<feature type="chain" id="PRO_1000059421" description="A-type ATP synthase subunit E">
    <location>
        <begin position="1"/>
        <end position="195"/>
    </location>
</feature>
<evidence type="ECO:0000255" key="1">
    <source>
        <dbReference type="HAMAP-Rule" id="MF_00311"/>
    </source>
</evidence>
<proteinExistence type="inferred from homology"/>
<keyword id="KW-0066">ATP synthesis</keyword>
<keyword id="KW-1003">Cell membrane</keyword>
<keyword id="KW-0375">Hydrogen ion transport</keyword>
<keyword id="KW-0406">Ion transport</keyword>
<keyword id="KW-0472">Membrane</keyword>
<keyword id="KW-1185">Reference proteome</keyword>
<keyword id="KW-0813">Transport</keyword>
<sequence>MNTHEVEELRQKLLEDARKKSEEIIREAEREAERIIEEAERKWREKAEQEREKIITNARLEAQKIISEARRNYRITISKAKAEVINKILEEAKIRLTNRIGFDIEESLKKLLDEALYYIENPSKIIINPRDRDFIKKVLKEKGLKNIEIVESDNILGGLIIESIDGERVDNSYNTRLERAKSIVLAELNIILWGK</sequence>
<comment type="function">
    <text evidence="1">Component of the A-type ATP synthase that produces ATP from ADP in the presence of a proton gradient across the membrane.</text>
</comment>
<comment type="subunit">
    <text evidence="1">Has multiple subunits with at least A(3), B(3), C, D, E, F, H, I and proteolipid K(x).</text>
</comment>
<comment type="subcellular location">
    <subcellularLocation>
        <location evidence="1">Cell membrane</location>
        <topology evidence="1">Peripheral membrane protein</topology>
    </subcellularLocation>
</comment>
<comment type="similarity">
    <text evidence="1">Belongs to the V-ATPase E subunit family.</text>
</comment>
<name>AATE_STAMF</name>